<feature type="signal peptide" evidence="2">
    <location>
        <begin position="1"/>
        <end position="18"/>
    </location>
</feature>
<feature type="propeptide" id="PRO_0000413046" description="Activation peptide" evidence="5">
    <location>
        <begin position="19"/>
        <end position="50"/>
    </location>
</feature>
<feature type="chain" id="PRO_0000413047" description="Candidapepsin-1">
    <location>
        <begin position="51"/>
        <end position="391"/>
    </location>
</feature>
<feature type="domain" description="Peptidase A1" evidence="3">
    <location>
        <begin position="64"/>
        <end position="377"/>
    </location>
</feature>
<feature type="active site" evidence="4">
    <location>
        <position position="82"/>
    </location>
</feature>
<feature type="active site" evidence="4">
    <location>
        <position position="267"/>
    </location>
</feature>
<feature type="glycosylation site" description="N-linked (GlcNAc...) asparagine" evidence="2">
    <location>
        <position position="40"/>
    </location>
</feature>
<feature type="disulfide bond" evidence="1">
    <location>
        <begin position="97"/>
        <end position="109"/>
    </location>
</feature>
<feature type="disulfide bond" evidence="1">
    <location>
        <begin position="305"/>
        <end position="343"/>
    </location>
</feature>
<feature type="sequence variant" description="In allele 2.6.">
    <original>Y</original>
    <variation>N</variation>
    <location>
        <position position="131"/>
    </location>
</feature>
<feature type="sequence variant" description="In allele 2.4.">
    <original>V</original>
    <variation>A</variation>
    <location>
        <position position="319"/>
    </location>
</feature>
<comment type="catalytic activity">
    <reaction>
        <text>Preferential cleavage at the carboxyl of hydrophobic amino acids, but fails to cleave 15-Leu-|-Tyr-16, 16-Tyr-|-Leu-17 and 24-Phe-|-Phe-25 of insulin B chain. Activates trypsinogen, and degrades keratin.</text>
        <dbReference type="EC" id="3.4.23.24"/>
    </reaction>
</comment>
<comment type="subcellular location">
    <subcellularLocation>
        <location>Secreted</location>
    </subcellularLocation>
</comment>
<comment type="PTM">
    <text evidence="1">O-glycosylated.</text>
</comment>
<comment type="miscellaneous">
    <text>Expressed exclusively in O (opaque) cells and not in W (white) cells of strain WO-1.</text>
</comment>
<comment type="similarity">
    <text evidence="6">Belongs to the peptidase A1 family.</text>
</comment>
<protein>
    <recommendedName>
        <fullName>Candidapepsin-1</fullName>
        <ecNumber>3.4.23.24</ecNumber>
    </recommendedName>
    <alternativeName>
        <fullName>ACP 1</fullName>
    </alternativeName>
    <alternativeName>
        <fullName>Aspartate protease 1</fullName>
    </alternativeName>
    <alternativeName>
        <fullName>Secreted aspartic protease 1</fullName>
    </alternativeName>
</protein>
<evidence type="ECO:0000250" key="1"/>
<evidence type="ECO:0000255" key="2"/>
<evidence type="ECO:0000255" key="3">
    <source>
        <dbReference type="PROSITE-ProRule" id="PRU01103"/>
    </source>
</evidence>
<evidence type="ECO:0000255" key="4">
    <source>
        <dbReference type="PROSITE-ProRule" id="PRU10094"/>
    </source>
</evidence>
<evidence type="ECO:0000269" key="5">
    <source>
    </source>
</evidence>
<evidence type="ECO:0000305" key="6"/>
<sequence>MFLKNIFIALAIALLVDASPAKRSPGFVTLDFDVIKTPVNATGQEGKVKRQALPVTLNNEHVSYAADITIGSNKQKFNVIVDTGSSDLWVPDASVTCDKPRPGQSADFCKGKGIYTPKSSTTSQNLGTPFYIGYGDGSSSQGTLYKDTVGFGGASITKQVFADITKTSIPQGILGIGYKTNEAAGDYDNVPVTLKNQGVIAKNAYSLYLNSPNAATGQIIFGGVDKAKYSGSLIAVPVTSDRELRITLNSLKAVGKNINGNIDVLLDSGTTITYLQQDVAQDIIDAFQAELKSDGQGHTFYVTDCQTSGTVDFNFDNNVKISVPASEFTAPLSYANGQPYPKCQLLLGISDANILGDNFLRSAYLVYDLDDDKISLAQVKYTSASNIAALT</sequence>
<organism>
    <name type="scientific">Candida albicans (strain WO-1)</name>
    <name type="common">Yeast</name>
    <dbReference type="NCBI Taxonomy" id="294748"/>
    <lineage>
        <taxon>Eukaryota</taxon>
        <taxon>Fungi</taxon>
        <taxon>Dikarya</taxon>
        <taxon>Ascomycota</taxon>
        <taxon>Saccharomycotina</taxon>
        <taxon>Pichiomycetes</taxon>
        <taxon>Debaryomycetaceae</taxon>
        <taxon>Candida/Lodderomyces clade</taxon>
        <taxon>Candida</taxon>
    </lineage>
</organism>
<keyword id="KW-0064">Aspartyl protease</keyword>
<keyword id="KW-0165">Cleavage on pair of basic residues</keyword>
<keyword id="KW-0903">Direct protein sequencing</keyword>
<keyword id="KW-1015">Disulfide bond</keyword>
<keyword id="KW-0325">Glycoprotein</keyword>
<keyword id="KW-0378">Hydrolase</keyword>
<keyword id="KW-0645">Protease</keyword>
<keyword id="KW-0964">Secreted</keyword>
<keyword id="KW-0732">Signal</keyword>
<keyword id="KW-0865">Zymogen</keyword>
<accession>C4YSF6</accession>
<accession>P28872</accession>
<accession>Q5A8N4</accession>
<gene>
    <name type="primary">SAP1</name>
    <name type="synonym">PRA10</name>
    <name type="synonym">PRA3</name>
    <name type="ORF">CAWG_05021</name>
</gene>
<reference key="1">
    <citation type="journal article" date="1994" name="J. Bacteriol.">
        <title>A fourth secreted aspartyl proteinase gene (SAP4) and a CARE2 repetitive element are located upstream of the SAP1 gene in Candida albicans.</title>
        <authorList>
            <person name="Miyasaki S.H."/>
            <person name="White T.C."/>
            <person name="Agabian N."/>
        </authorList>
    </citation>
    <scope>NUCLEOTIDE SEQUENCE [GENOMIC DNA]</scope>
    <source>
        <strain>WO-1</strain>
    </source>
</reference>
<reference key="2">
    <citation type="journal article" date="2009" name="Nature">
        <title>Evolution of pathogenicity and sexual reproduction in eight Candida genomes.</title>
        <authorList>
            <person name="Butler G."/>
            <person name="Rasmussen M.D."/>
            <person name="Lin M.F."/>
            <person name="Santos M.A.S."/>
            <person name="Sakthikumar S."/>
            <person name="Munro C.A."/>
            <person name="Rheinbay E."/>
            <person name="Grabherr M."/>
            <person name="Forche A."/>
            <person name="Reedy J.L."/>
            <person name="Agrafioti I."/>
            <person name="Arnaud M.B."/>
            <person name="Bates S."/>
            <person name="Brown A.J.P."/>
            <person name="Brunke S."/>
            <person name="Costanzo M.C."/>
            <person name="Fitzpatrick D.A."/>
            <person name="de Groot P.W.J."/>
            <person name="Harris D."/>
            <person name="Hoyer L.L."/>
            <person name="Hube B."/>
            <person name="Klis F.M."/>
            <person name="Kodira C."/>
            <person name="Lennard N."/>
            <person name="Logue M.E."/>
            <person name="Martin R."/>
            <person name="Neiman A.M."/>
            <person name="Nikolaou E."/>
            <person name="Quail M.A."/>
            <person name="Quinn J."/>
            <person name="Santos M.C."/>
            <person name="Schmitzberger F.F."/>
            <person name="Sherlock G."/>
            <person name="Shah P."/>
            <person name="Silverstein K.A.T."/>
            <person name="Skrzypek M.S."/>
            <person name="Soll D."/>
            <person name="Staggs R."/>
            <person name="Stansfield I."/>
            <person name="Stumpf M.P.H."/>
            <person name="Sudbery P.E."/>
            <person name="Srikantha T."/>
            <person name="Zeng Q."/>
            <person name="Berman J."/>
            <person name="Berriman M."/>
            <person name="Heitman J."/>
            <person name="Gow N.A.R."/>
            <person name="Lorenz M.C."/>
            <person name="Birren B.W."/>
            <person name="Kellis M."/>
            <person name="Cuomo C.A."/>
        </authorList>
    </citation>
    <scope>NUCLEOTIDE SEQUENCE [LARGE SCALE GENOMIC DNA]</scope>
    <source>
        <strain>WO-1</strain>
    </source>
</reference>
<reference key="3">
    <citation type="journal article" date="1993" name="J. Bacteriol.">
        <title>Three distinct secreted aspartyl proteinases in Candida albicans.</title>
        <authorList>
            <person name="White T.C."/>
            <person name="Miyasaki S.H."/>
            <person name="Agabian N."/>
        </authorList>
    </citation>
    <scope>PROTEIN SEQUENCE OF 51-65</scope>
    <source>
        <strain>WO-1</strain>
    </source>
</reference>
<reference key="4">
    <citation type="journal article" date="1995" name="J. Bacteriol.">
        <title>The 'universal' leucine codon CTG in the secreted aspartyl proteinase 1 (SAP1) gene of Candida albicans encodes a serine in vivo.</title>
        <authorList>
            <person name="White T.C."/>
            <person name="Andrews L.E."/>
            <person name="Maltby D."/>
            <person name="Agabian N."/>
        </authorList>
    </citation>
    <scope>PARTIAL PROTEIN SEQUENCE</scope>
    <source>
        <strain>WO-1</strain>
    </source>
</reference>
<dbReference type="EC" id="3.4.23.24"/>
<dbReference type="EMBL" id="L12451">
    <property type="protein sequence ID" value="AAA34370.2"/>
    <property type="molecule type" value="Genomic_DNA"/>
</dbReference>
<dbReference type="EMBL" id="L12452">
    <property type="protein sequence ID" value="AAA34371.2"/>
    <property type="molecule type" value="Genomic_DNA"/>
</dbReference>
<dbReference type="EMBL" id="CM000312">
    <property type="protein sequence ID" value="EEQ46659.1"/>
    <property type="molecule type" value="Genomic_DNA"/>
</dbReference>
<dbReference type="SMR" id="C4YSF6"/>
<dbReference type="MEROPS" id="A01.014"/>
<dbReference type="GlyCosmos" id="C4YSF6">
    <property type="glycosylation" value="1 site, No reported glycans"/>
</dbReference>
<dbReference type="PaxDb" id="5476-C4YSF6"/>
<dbReference type="VEuPathDB" id="FungiDB:CAWG_05021"/>
<dbReference type="HOGENOM" id="CLU_013253_9_1_1"/>
<dbReference type="OMA" id="GIGYKTN"/>
<dbReference type="OrthoDB" id="20489at766764"/>
<dbReference type="Proteomes" id="UP000001429">
    <property type="component" value="Chromosome 6"/>
</dbReference>
<dbReference type="GO" id="GO:0005576">
    <property type="term" value="C:extracellular region"/>
    <property type="evidence" value="ECO:0007669"/>
    <property type="project" value="UniProtKB-SubCell"/>
</dbReference>
<dbReference type="GO" id="GO:0004190">
    <property type="term" value="F:aspartic-type endopeptidase activity"/>
    <property type="evidence" value="ECO:0007669"/>
    <property type="project" value="UniProtKB-KW"/>
</dbReference>
<dbReference type="GO" id="GO:0006508">
    <property type="term" value="P:proteolysis"/>
    <property type="evidence" value="ECO:0007669"/>
    <property type="project" value="UniProtKB-KW"/>
</dbReference>
<dbReference type="CDD" id="cd05474">
    <property type="entry name" value="SAP_like"/>
    <property type="match status" value="1"/>
</dbReference>
<dbReference type="FunFam" id="2.40.70.10:FF:000011">
    <property type="entry name" value="Aspartic protease"/>
    <property type="match status" value="1"/>
</dbReference>
<dbReference type="FunFam" id="2.40.70.10:FF:000023">
    <property type="entry name" value="Aspartic protease"/>
    <property type="match status" value="1"/>
</dbReference>
<dbReference type="Gene3D" id="2.40.70.10">
    <property type="entry name" value="Acid Proteases"/>
    <property type="match status" value="2"/>
</dbReference>
<dbReference type="InterPro" id="IPR001461">
    <property type="entry name" value="Aspartic_peptidase_A1"/>
</dbReference>
<dbReference type="InterPro" id="IPR001969">
    <property type="entry name" value="Aspartic_peptidase_AS"/>
</dbReference>
<dbReference type="InterPro" id="IPR033121">
    <property type="entry name" value="PEPTIDASE_A1"/>
</dbReference>
<dbReference type="InterPro" id="IPR021109">
    <property type="entry name" value="Peptidase_aspartic_dom_sf"/>
</dbReference>
<dbReference type="InterPro" id="IPR033876">
    <property type="entry name" value="SAP-like"/>
</dbReference>
<dbReference type="PANTHER" id="PTHR47966:SF65">
    <property type="entry name" value="ASPARTIC-TYPE ENDOPEPTIDASE"/>
    <property type="match status" value="1"/>
</dbReference>
<dbReference type="PANTHER" id="PTHR47966">
    <property type="entry name" value="BETA-SITE APP-CLEAVING ENZYME, ISOFORM A-RELATED"/>
    <property type="match status" value="1"/>
</dbReference>
<dbReference type="Pfam" id="PF00026">
    <property type="entry name" value="Asp"/>
    <property type="match status" value="1"/>
</dbReference>
<dbReference type="PRINTS" id="PR00792">
    <property type="entry name" value="PEPSIN"/>
</dbReference>
<dbReference type="SUPFAM" id="SSF50630">
    <property type="entry name" value="Acid proteases"/>
    <property type="match status" value="1"/>
</dbReference>
<dbReference type="PROSITE" id="PS00141">
    <property type="entry name" value="ASP_PROTEASE"/>
    <property type="match status" value="2"/>
</dbReference>
<dbReference type="PROSITE" id="PS51767">
    <property type="entry name" value="PEPTIDASE_A1"/>
    <property type="match status" value="1"/>
</dbReference>
<proteinExistence type="evidence at protein level"/>
<name>CARP1_CANAW</name>